<evidence type="ECO:0000255" key="1">
    <source>
        <dbReference type="HAMAP-Rule" id="MF_03141"/>
    </source>
</evidence>
<reference key="1">
    <citation type="journal article" date="2009" name="Genome Res.">
        <title>Comparative genomics of the fungal pathogens Candida dubliniensis and Candida albicans.</title>
        <authorList>
            <person name="Jackson A.P."/>
            <person name="Gamble J.A."/>
            <person name="Yeomans T."/>
            <person name="Moran G.P."/>
            <person name="Saunders D."/>
            <person name="Harris D."/>
            <person name="Aslett M."/>
            <person name="Barrell J.F."/>
            <person name="Butler G."/>
            <person name="Citiulo F."/>
            <person name="Coleman D.C."/>
            <person name="de Groot P.W.J."/>
            <person name="Goodwin T.J."/>
            <person name="Quail M.A."/>
            <person name="McQuillan J."/>
            <person name="Munro C.A."/>
            <person name="Pain A."/>
            <person name="Poulter R.T."/>
            <person name="Rajandream M.A."/>
            <person name="Renauld H."/>
            <person name="Spiering M.J."/>
            <person name="Tivey A."/>
            <person name="Gow N.A.R."/>
            <person name="Barrell B."/>
            <person name="Sullivan D.J."/>
            <person name="Berriman M."/>
        </authorList>
    </citation>
    <scope>NUCLEOTIDE SEQUENCE [LARGE SCALE GENOMIC DNA]</scope>
    <source>
        <strain>CD36 / ATCC MYA-646 / CBS 7987 / NCPF 3949 / NRRL Y-17841</strain>
    </source>
</reference>
<organism>
    <name type="scientific">Candida dubliniensis (strain CD36 / ATCC MYA-646 / CBS 7987 / NCPF 3949 / NRRL Y-17841)</name>
    <name type="common">Yeast</name>
    <dbReference type="NCBI Taxonomy" id="573826"/>
    <lineage>
        <taxon>Eukaryota</taxon>
        <taxon>Fungi</taxon>
        <taxon>Dikarya</taxon>
        <taxon>Ascomycota</taxon>
        <taxon>Saccharomycotina</taxon>
        <taxon>Pichiomycetes</taxon>
        <taxon>Debaryomycetaceae</taxon>
        <taxon>Candida/Lodderomyces clade</taxon>
        <taxon>Candida</taxon>
    </lineage>
</organism>
<dbReference type="EMBL" id="FM992690">
    <property type="protein sequence ID" value="CAX42579.1"/>
    <property type="molecule type" value="Genomic_DNA"/>
</dbReference>
<dbReference type="RefSeq" id="XP_002418997.1">
    <property type="nucleotide sequence ID" value="XM_002418952.1"/>
</dbReference>
<dbReference type="SMR" id="B9WD30"/>
<dbReference type="GeneID" id="8046779"/>
<dbReference type="KEGG" id="cdu:CD36_80490"/>
<dbReference type="CGD" id="CAL0000161252">
    <property type="gene designation" value="Cd36_80490"/>
</dbReference>
<dbReference type="eggNOG" id="KOG0295">
    <property type="taxonomic scope" value="Eukaryota"/>
</dbReference>
<dbReference type="HOGENOM" id="CLU_000288_57_15_1"/>
<dbReference type="OrthoDB" id="10264588at2759"/>
<dbReference type="Proteomes" id="UP000002605">
    <property type="component" value="Chromosome 3"/>
</dbReference>
<dbReference type="GO" id="GO:0005737">
    <property type="term" value="C:cytoplasm"/>
    <property type="evidence" value="ECO:0007669"/>
    <property type="project" value="UniProtKB-UniRule"/>
</dbReference>
<dbReference type="GO" id="GO:0005874">
    <property type="term" value="C:microtubule"/>
    <property type="evidence" value="ECO:0007669"/>
    <property type="project" value="UniProtKB-KW"/>
</dbReference>
<dbReference type="GO" id="GO:0005875">
    <property type="term" value="C:microtubule associated complex"/>
    <property type="evidence" value="ECO:0007669"/>
    <property type="project" value="UniProtKB-UniRule"/>
</dbReference>
<dbReference type="GO" id="GO:0000922">
    <property type="term" value="C:spindle pole"/>
    <property type="evidence" value="ECO:0007669"/>
    <property type="project" value="UniProtKB-SubCell"/>
</dbReference>
<dbReference type="GO" id="GO:0070840">
    <property type="term" value="F:dynein complex binding"/>
    <property type="evidence" value="ECO:0007669"/>
    <property type="project" value="UniProtKB-UniRule"/>
</dbReference>
<dbReference type="GO" id="GO:0051301">
    <property type="term" value="P:cell division"/>
    <property type="evidence" value="ECO:0007669"/>
    <property type="project" value="UniProtKB-KW"/>
</dbReference>
<dbReference type="GO" id="GO:0000132">
    <property type="term" value="P:establishment of mitotic spindle orientation"/>
    <property type="evidence" value="ECO:0007669"/>
    <property type="project" value="UniProtKB-UniRule"/>
</dbReference>
<dbReference type="GO" id="GO:0051012">
    <property type="term" value="P:microtubule sliding"/>
    <property type="evidence" value="ECO:0007669"/>
    <property type="project" value="UniProtKB-UniRule"/>
</dbReference>
<dbReference type="CDD" id="cd00200">
    <property type="entry name" value="WD40"/>
    <property type="match status" value="1"/>
</dbReference>
<dbReference type="FunFam" id="2.130.10.10:FF:000902">
    <property type="entry name" value="Nuclear distribution protein PAC1"/>
    <property type="match status" value="1"/>
</dbReference>
<dbReference type="Gene3D" id="1.20.960.30">
    <property type="match status" value="1"/>
</dbReference>
<dbReference type="Gene3D" id="2.130.10.10">
    <property type="entry name" value="YVTN repeat-like/Quinoprotein amine dehydrogenase"/>
    <property type="match status" value="1"/>
</dbReference>
<dbReference type="HAMAP" id="MF_03141">
    <property type="entry name" value="lis1"/>
    <property type="match status" value="1"/>
</dbReference>
<dbReference type="InterPro" id="IPR017252">
    <property type="entry name" value="Dynein_regulator_LIS1"/>
</dbReference>
<dbReference type="InterPro" id="IPR020472">
    <property type="entry name" value="G-protein_beta_WD-40_rep"/>
</dbReference>
<dbReference type="InterPro" id="IPR037190">
    <property type="entry name" value="LIS1_N"/>
</dbReference>
<dbReference type="InterPro" id="IPR015943">
    <property type="entry name" value="WD40/YVTN_repeat-like_dom_sf"/>
</dbReference>
<dbReference type="InterPro" id="IPR019775">
    <property type="entry name" value="WD40_repeat_CS"/>
</dbReference>
<dbReference type="InterPro" id="IPR036322">
    <property type="entry name" value="WD40_repeat_dom_sf"/>
</dbReference>
<dbReference type="InterPro" id="IPR001680">
    <property type="entry name" value="WD40_rpt"/>
</dbReference>
<dbReference type="InterPro" id="IPR050349">
    <property type="entry name" value="WD_LIS1/nudF_dynein_reg"/>
</dbReference>
<dbReference type="PANTHER" id="PTHR44129">
    <property type="entry name" value="WD REPEAT-CONTAINING PROTEIN POP1"/>
    <property type="match status" value="1"/>
</dbReference>
<dbReference type="Pfam" id="PF00400">
    <property type="entry name" value="WD40"/>
    <property type="match status" value="6"/>
</dbReference>
<dbReference type="PIRSF" id="PIRSF037647">
    <property type="entry name" value="Dynein_regulator_Lis1"/>
    <property type="match status" value="1"/>
</dbReference>
<dbReference type="PRINTS" id="PR00320">
    <property type="entry name" value="GPROTEINBRPT"/>
</dbReference>
<dbReference type="SMART" id="SM00320">
    <property type="entry name" value="WD40"/>
    <property type="match status" value="7"/>
</dbReference>
<dbReference type="SUPFAM" id="SSF109925">
    <property type="entry name" value="Lissencephaly-1 protein (Lis-1, PAF-AH alpha) N-terminal domain"/>
    <property type="match status" value="1"/>
</dbReference>
<dbReference type="SUPFAM" id="SSF50978">
    <property type="entry name" value="WD40 repeat-like"/>
    <property type="match status" value="1"/>
</dbReference>
<dbReference type="PROSITE" id="PS00678">
    <property type="entry name" value="WD_REPEATS_1"/>
    <property type="match status" value="2"/>
</dbReference>
<dbReference type="PROSITE" id="PS50082">
    <property type="entry name" value="WD_REPEATS_2"/>
    <property type="match status" value="5"/>
</dbReference>
<dbReference type="PROSITE" id="PS50294">
    <property type="entry name" value="WD_REPEATS_REGION"/>
    <property type="match status" value="1"/>
</dbReference>
<sequence>MEKLSILTERQQTELNYAIIQYLQPLCQQDNHALLDQLSKILNIDQWTQESNNVEKVDNYLEKRWSTVLRLQKKIIDLENEISNLNNIINSSNSDNNGIVLSKDKINWIPKGTAKQSYQCENIVTTVKLHPNLPLVLNGCNDGNLYIWNISNDDNTIPEKMIKAHTRAINKICFTYKKPYYLATCSSDLTIKIWDEKFNHIRTLNGHEHTVSSIQFSPIDNSILYSVSRDKNIRVWDIFQGISLKSFVGHSEWCRDLDIVSSDNNGDFVLTCSNDQSARLSHASSGAGLAMIVGHGHVVETVKFLPALQANKILDEYITKNIEQFPTIPLELLKDKTYNQLGFKYCITASRDNTIKLWLIPPPKIAPHRPPLPSKYNNSQSWMIAELRGHSSWVKCLCVHPNGRFIISGSDDKTIKFWDLSSLLETGSVNVVKTIIGHDGFINDIDFARLKEASDSTPTSQEDLLKEVEKRMRCLFISGSADNSIKLWN</sequence>
<gene>
    <name evidence="1" type="primary">PAC1</name>
    <name evidence="1" type="synonym">LIS1</name>
    <name type="ORF">CD36_80490</name>
</gene>
<protein>
    <recommendedName>
        <fullName evidence="1">Nuclear distribution protein PAC1</fullName>
    </recommendedName>
    <alternativeName>
        <fullName evidence="1">Lissencephaly-1 homolog</fullName>
        <shortName evidence="1">LIS-1</shortName>
    </alternativeName>
    <alternativeName>
        <fullName evidence="1">nudF homolog</fullName>
    </alternativeName>
</protein>
<proteinExistence type="inferred from homology"/>
<feature type="chain" id="PRO_0000405073" description="Nuclear distribution protein PAC1">
    <location>
        <begin position="1"/>
        <end position="489"/>
    </location>
</feature>
<feature type="repeat" description="WD 1">
    <location>
        <begin position="119"/>
        <end position="158"/>
    </location>
</feature>
<feature type="repeat" description="WD 2">
    <location>
        <begin position="164"/>
        <end position="205"/>
    </location>
</feature>
<feature type="repeat" description="WD 3">
    <location>
        <begin position="206"/>
        <end position="246"/>
    </location>
</feature>
<feature type="repeat" description="WD 4">
    <location>
        <begin position="249"/>
        <end position="291"/>
    </location>
</feature>
<feature type="repeat" description="WD 5">
    <location>
        <begin position="328"/>
        <end position="368"/>
    </location>
</feature>
<feature type="repeat" description="WD 6">
    <location>
        <begin position="389"/>
        <end position="428"/>
    </location>
</feature>
<feature type="repeat" description="WD 7">
    <location>
        <begin position="437"/>
        <end position="486"/>
    </location>
</feature>
<feature type="coiled-coil region" evidence="1">
    <location>
        <begin position="66"/>
        <end position="98"/>
    </location>
</feature>
<accession>B9WD30</accession>
<comment type="function">
    <text evidence="1">Positively regulates the activity of the minus-end directed microtubule motor protein dynein. Plays a central role in positioning the mitotic spindle at the bud neck during cell division. Targets cytoplasmic dynein to microtubule plus ends, thereby promoting dynein-mediated microtubule sliding along the bud cortex and consequently the movement of the mitotic spindle to the bud neck.</text>
</comment>
<comment type="subunit">
    <text evidence="1">Self-associates. Interacts with NDL1 and dynein.</text>
</comment>
<comment type="subcellular location">
    <subcellularLocation>
        <location evidence="1">Cytoplasm</location>
        <location evidence="1">Cytoskeleton</location>
    </subcellularLocation>
    <subcellularLocation>
        <location evidence="1">Cytoplasm</location>
        <location evidence="1">Cytoskeleton</location>
        <location evidence="1">Spindle pole</location>
    </subcellularLocation>
    <text evidence="1">Localizes to the plus ends of microtubules and the mitotic spindle poles.</text>
</comment>
<comment type="similarity">
    <text evidence="1">Belongs to the WD repeat LIS1/nudF family.</text>
</comment>
<name>LIS1_CANDC</name>
<keyword id="KW-0131">Cell cycle</keyword>
<keyword id="KW-0132">Cell division</keyword>
<keyword id="KW-0175">Coiled coil</keyword>
<keyword id="KW-0963">Cytoplasm</keyword>
<keyword id="KW-0206">Cytoskeleton</keyword>
<keyword id="KW-0493">Microtubule</keyword>
<keyword id="KW-0498">Mitosis</keyword>
<keyword id="KW-0677">Repeat</keyword>
<keyword id="KW-0813">Transport</keyword>
<keyword id="KW-0853">WD repeat</keyword>